<proteinExistence type="evidence at protein level"/>
<comment type="function">
    <text evidence="3">Catalyzes the formation of N(5)-methyl-L-glutamine from glutamate and methylamine.</text>
</comment>
<comment type="catalytic activity">
    <reaction evidence="3">
        <text>methylamine + L-glutamate + ATP = N(5)-methyl-L-glutamine + ADP + phosphate + H(+)</text>
        <dbReference type="Rhea" id="RHEA:17117"/>
        <dbReference type="ChEBI" id="CHEBI:15378"/>
        <dbReference type="ChEBI" id="CHEBI:29985"/>
        <dbReference type="ChEBI" id="CHEBI:30616"/>
        <dbReference type="ChEBI" id="CHEBI:43474"/>
        <dbReference type="ChEBI" id="CHEBI:58200"/>
        <dbReference type="ChEBI" id="CHEBI:59338"/>
        <dbReference type="ChEBI" id="CHEBI:456216"/>
        <dbReference type="EC" id="6.3.4.12"/>
    </reaction>
</comment>
<comment type="cofactor">
    <cofactor evidence="3">
        <name>Mg(2+)</name>
        <dbReference type="ChEBI" id="CHEBI:18420"/>
    </cofactor>
    <text evidence="3">No activity is detected with Mn(2+).</text>
</comment>
<comment type="induction">
    <text evidence="3">Induced during growth on methylamine.</text>
</comment>
<comment type="disruption phenotype">
    <text evidence="3">Fails to grow on methylamine. N(5)-methyl-L-glutamine is not detected in the intracellular pool of free amino acids from the deletion mutant.</text>
</comment>
<comment type="similarity">
    <text evidence="5">Belongs to the glutamine synthetase family. Type 3 subfamily.</text>
</comment>
<dbReference type="EC" id="6.3.4.12" evidence="3"/>
<dbReference type="EMBL" id="HM037347">
    <property type="protein sequence ID" value="ADH10360.1"/>
    <property type="molecule type" value="Genomic_DNA"/>
</dbReference>
<dbReference type="EMBL" id="AFHG01000058">
    <property type="protein sequence ID" value="EGK70211.1"/>
    <property type="molecule type" value="Genomic_DNA"/>
</dbReference>
<dbReference type="RefSeq" id="WP_008064112.1">
    <property type="nucleotide sequence ID" value="NZ_AFHG01000058.1"/>
</dbReference>
<dbReference type="SMR" id="F5RH07"/>
<dbReference type="STRING" id="1000565.METUNv1_03599"/>
<dbReference type="eggNOG" id="COG0174">
    <property type="taxonomic scope" value="Bacteria"/>
</dbReference>
<dbReference type="OrthoDB" id="9807095at2"/>
<dbReference type="BRENDA" id="6.3.4.12">
    <property type="organism ID" value="9966"/>
</dbReference>
<dbReference type="Proteomes" id="UP000005019">
    <property type="component" value="Unassembled WGS sequence"/>
</dbReference>
<dbReference type="GO" id="GO:0005524">
    <property type="term" value="F:ATP binding"/>
    <property type="evidence" value="ECO:0007669"/>
    <property type="project" value="UniProtKB-KW"/>
</dbReference>
<dbReference type="GO" id="GO:0047943">
    <property type="term" value="F:glutamate-methylamine ligase activity"/>
    <property type="evidence" value="ECO:0007669"/>
    <property type="project" value="UniProtKB-EC"/>
</dbReference>
<dbReference type="GO" id="GO:0004356">
    <property type="term" value="F:glutamine synthetase activity"/>
    <property type="evidence" value="ECO:0007669"/>
    <property type="project" value="InterPro"/>
</dbReference>
<dbReference type="GO" id="GO:0006542">
    <property type="term" value="P:glutamine biosynthetic process"/>
    <property type="evidence" value="ECO:0007669"/>
    <property type="project" value="InterPro"/>
</dbReference>
<dbReference type="Gene3D" id="3.10.20.70">
    <property type="entry name" value="Glutamine synthetase, N-terminal domain"/>
    <property type="match status" value="1"/>
</dbReference>
<dbReference type="Gene3D" id="3.30.590.10">
    <property type="entry name" value="Glutamine synthetase/guanido kinase, catalytic domain"/>
    <property type="match status" value="1"/>
</dbReference>
<dbReference type="InterPro" id="IPR008147">
    <property type="entry name" value="Gln_synt_N"/>
</dbReference>
<dbReference type="InterPro" id="IPR036651">
    <property type="entry name" value="Gln_synt_N_sf"/>
</dbReference>
<dbReference type="InterPro" id="IPR014746">
    <property type="entry name" value="Gln_synth/guanido_kin_cat_dom"/>
</dbReference>
<dbReference type="InterPro" id="IPR008146">
    <property type="entry name" value="Gln_synth_cat_dom"/>
</dbReference>
<dbReference type="InterPro" id="IPR027303">
    <property type="entry name" value="Gln_synth_gly_rich_site"/>
</dbReference>
<dbReference type="InterPro" id="IPR017536">
    <property type="entry name" value="Glutamine_synthetase_typeIII"/>
</dbReference>
<dbReference type="NCBIfam" id="TIGR03105">
    <property type="entry name" value="gln_synth_III"/>
    <property type="match status" value="1"/>
</dbReference>
<dbReference type="PANTHER" id="PTHR43785">
    <property type="entry name" value="GAMMA-GLUTAMYLPUTRESCINE SYNTHETASE"/>
    <property type="match status" value="1"/>
</dbReference>
<dbReference type="PANTHER" id="PTHR43785:SF12">
    <property type="entry name" value="TYPE-1 GLUTAMINE SYNTHETASE 2"/>
    <property type="match status" value="1"/>
</dbReference>
<dbReference type="Pfam" id="PF00120">
    <property type="entry name" value="Gln-synt_C"/>
    <property type="match status" value="1"/>
</dbReference>
<dbReference type="SMART" id="SM01230">
    <property type="entry name" value="Gln-synt_C"/>
    <property type="match status" value="1"/>
</dbReference>
<dbReference type="SUPFAM" id="SSF54368">
    <property type="entry name" value="Glutamine synthetase, N-terminal domain"/>
    <property type="match status" value="1"/>
</dbReference>
<dbReference type="SUPFAM" id="SSF55931">
    <property type="entry name" value="Glutamine synthetase/guanido kinase"/>
    <property type="match status" value="1"/>
</dbReference>
<dbReference type="PROSITE" id="PS00181">
    <property type="entry name" value="GLNA_ATP"/>
    <property type="match status" value="1"/>
</dbReference>
<dbReference type="PROSITE" id="PS51986">
    <property type="entry name" value="GS_BETA_GRASP"/>
    <property type="match status" value="1"/>
</dbReference>
<dbReference type="PROSITE" id="PS51987">
    <property type="entry name" value="GS_CATALYTIC"/>
    <property type="match status" value="1"/>
</dbReference>
<protein>
    <recommendedName>
        <fullName evidence="4">Glutamate--methylamine ligase</fullName>
        <ecNumber evidence="3">6.3.4.12</ecNumber>
    </recommendedName>
    <alternativeName>
        <fullName evidence="4">Gamma-glutamylmethylamide synthetase</fullName>
        <shortName evidence="4">GMAS</shortName>
    </alternativeName>
</protein>
<sequence>MSPSEAQQFLKENQVKYILAQFVDIHGSAKTKSVPAEHYKTVVTDGAGFAGFAIWGMGMTPNVDADYMAVGDASTLSLVPWQPGYARIACDGHTHGKPHEYDTRVVLKKQLEQITARGWTFFTGMEPEFSLLRKVEGKLLPADPGDTLSKPCYDYKGLSRARVFLERLSESLRSVGIDVYQIDHEDANGQFEINYTFTDALTSCDHYTFFKMGAAEIAAELGLICSFMPKPFSNRPGNGLHMHMSIGDGKRNLFEDKSDKHGLALSKLAYHWAAGLLKHAPALAALCCPTVNSYKRLVVGRSLTGATWAPAYICYGGNNRSGMIRSPGGRLELRLPDASCNAYLATAAVIAAGMDGVINELDPGAPQNDNLYEYSQAQLDAAGIKVLPQNLHEALLALEKDEVIRSALGPVVDEFLRLKHMEWVEYMRHVSDWEVNSYLEFF</sequence>
<feature type="chain" id="PRO_0000431890" description="Glutamate--methylamine ligase">
    <location>
        <begin position="1"/>
        <end position="442"/>
    </location>
</feature>
<feature type="domain" description="GS beta-grasp" evidence="1">
    <location>
        <begin position="13"/>
        <end position="97"/>
    </location>
</feature>
<feature type="domain" description="GS catalytic" evidence="2">
    <location>
        <begin position="103"/>
        <end position="442"/>
    </location>
</feature>
<reference key="1">
    <citation type="journal article" date="2010" name="Mol. Microbiol.">
        <title>Genetics of the glutamate-mediated methylamine utilization pathway in the facultative methylotrophic beta-proteobacterium Methyloversatilis universalis FAM5.</title>
        <authorList>
            <person name="Latypova E."/>
            <person name="Yang S."/>
            <person name="Wang Y.S."/>
            <person name="Wang T."/>
            <person name="Chavkin T.A."/>
            <person name="Hackett M."/>
            <person name="Schafer H."/>
            <person name="Kalyuzhnaya M.G."/>
        </authorList>
    </citation>
    <scope>NUCLEOTIDE SEQUENCE [GENOMIC DNA]</scope>
    <scope>FUNCTION</scope>
    <scope>CATALYTIC ACTIVITY</scope>
    <scope>COFACTOR</scope>
    <scope>INDUCTION</scope>
    <scope>DISRUPTION PHENOTYPE</scope>
    <source>
        <strain>ATCC BAA-1314 / DSM 25237 / JCM 13912 / CCUG 52030 / FAM5</strain>
    </source>
</reference>
<reference key="2">
    <citation type="journal article" date="2011" name="J. Bacteriol.">
        <title>Genome sequence of Methyloversatilis universalis FAM5T, a methylotrophic representative of the order Rhodocyclales.</title>
        <authorList>
            <person name="Kittichotirat W."/>
            <person name="Good N.M."/>
            <person name="Hall R."/>
            <person name="Bringel F."/>
            <person name="Lajus A."/>
            <person name="Medigue C."/>
            <person name="Smalley N.E."/>
            <person name="Beck D."/>
            <person name="Bumgarner R."/>
            <person name="Vuilleumier S."/>
            <person name="Kalyuzhnaya M.G."/>
        </authorList>
    </citation>
    <scope>NUCLEOTIDE SEQUENCE [LARGE SCALE GENOMIC DNA]</scope>
    <source>
        <strain>ATCC BAA-1314 / DSM 25237 / JCM 13912 / CCUG 52030 / FAM5</strain>
    </source>
</reference>
<keyword id="KW-0067">ATP-binding</keyword>
<keyword id="KW-0436">Ligase</keyword>
<keyword id="KW-0460">Magnesium</keyword>
<keyword id="KW-0547">Nucleotide-binding</keyword>
<keyword id="KW-1185">Reference proteome</keyword>
<evidence type="ECO:0000255" key="1">
    <source>
        <dbReference type="PROSITE-ProRule" id="PRU01330"/>
    </source>
</evidence>
<evidence type="ECO:0000255" key="2">
    <source>
        <dbReference type="PROSITE-ProRule" id="PRU01331"/>
    </source>
</evidence>
<evidence type="ECO:0000269" key="3">
    <source>
    </source>
</evidence>
<evidence type="ECO:0000303" key="4">
    <source>
    </source>
</evidence>
<evidence type="ECO:0000305" key="5"/>
<evidence type="ECO:0000312" key="6">
    <source>
        <dbReference type="EMBL" id="EGK70211.1"/>
    </source>
</evidence>
<gene>
    <name evidence="4" type="primary">gms</name>
    <name evidence="6" type="ORF">METUNv1_03599</name>
</gene>
<organism>
    <name type="scientific">Methyloversatilis universalis (strain ATCC BAA-1314 / DSM 25237 / JCM 13912 / CCUG 52030 / FAM5)</name>
    <dbReference type="NCBI Taxonomy" id="1000565"/>
    <lineage>
        <taxon>Bacteria</taxon>
        <taxon>Pseudomonadati</taxon>
        <taxon>Pseudomonadota</taxon>
        <taxon>Betaproteobacteria</taxon>
        <taxon>Nitrosomonadales</taxon>
        <taxon>Sterolibacteriaceae</taxon>
        <taxon>Methyloversatilis</taxon>
    </lineage>
</organism>
<accession>F5RH07</accession>
<accession>D7R618</accession>
<name>GMAS_METUF</name>